<proteinExistence type="inferred from homology"/>
<sequence>MSELLFETYGVPSIGNDTYLFVPLLSIVHGSFEVRIVDAKDVSSYFLKGEPVLGACCRTNVGGFHITDFLRQLLSLKYPYHSASITWEKAEELKKEHCYVALDYMSELQIFKNNKEEAEEKTRYWQLPWVPPPVEEPPSEEELARKAALKEKAGQRLRDMAAAKRSQKIAELEKQLSYLEELMEQLDGAEEEEATAILGRSGYLSQQEIKSAILKATQSLRKAKGESNGNEEKADASGVDKYPLVSVPDETLTPEQLKEKKKQILLKTTTEGRMRAKQRRAEEEALREKQEEERRLENPELYLEELRARYSELSDRVDQRKRQKLNGGKTNGNHNSSGGVGRGERLNAAQKERMRLLTSAAFDRGKGEDTFGTRDEDWLVYKKMSKDNDDDDDGNDDDESELARIASKIQDMDPTFVNKAEAVQQTPEPPKVRTLTAEDYRISIGIERFRCPEILFQPGMIGIDQAGIDEMVSISLRRLMEDEAVKERLCQSILVTGGCSLIPGMIPRLESGIRQFRPYLSPLKLVRAADPLIDAWRGAAAFAASSKFGRHTFSLADYREHGENLFHRYNIVYSL</sequence>
<keyword id="KW-0175">Coiled coil</keyword>
<keyword id="KW-0539">Nucleus</keyword>
<keyword id="KW-1185">Reference proteome</keyword>
<protein>
    <recommendedName>
        <fullName>Actin-related protein 5</fullName>
    </recommendedName>
</protein>
<organism>
    <name type="scientific">Oryza sativa subsp. japonica</name>
    <name type="common">Rice</name>
    <dbReference type="NCBI Taxonomy" id="39947"/>
    <lineage>
        <taxon>Eukaryota</taxon>
        <taxon>Viridiplantae</taxon>
        <taxon>Streptophyta</taxon>
        <taxon>Embryophyta</taxon>
        <taxon>Tracheophyta</taxon>
        <taxon>Spermatophyta</taxon>
        <taxon>Magnoliopsida</taxon>
        <taxon>Liliopsida</taxon>
        <taxon>Poales</taxon>
        <taxon>Poaceae</taxon>
        <taxon>BOP clade</taxon>
        <taxon>Oryzoideae</taxon>
        <taxon>Oryzeae</taxon>
        <taxon>Oryzinae</taxon>
        <taxon>Oryza</taxon>
        <taxon>Oryza sativa</taxon>
    </lineage>
</organism>
<accession>A2ZP58</accession>
<accession>Q5ZBL6</accession>
<dbReference type="EMBL" id="AP003311">
    <property type="protein sequence ID" value="BAD61490.1"/>
    <property type="status" value="ALT_SEQ"/>
    <property type="molecule type" value="Genomic_DNA"/>
</dbReference>
<dbReference type="EMBL" id="AP014957">
    <property type="status" value="NOT_ANNOTATED_CDS"/>
    <property type="molecule type" value="Genomic_DNA"/>
</dbReference>
<dbReference type="EMBL" id="CM000138">
    <property type="status" value="NOT_ANNOTATED_CDS"/>
    <property type="molecule type" value="Genomic_DNA"/>
</dbReference>
<dbReference type="SMR" id="A2ZP58"/>
<dbReference type="FunCoup" id="A2ZP58">
    <property type="interactions" value="1988"/>
</dbReference>
<dbReference type="STRING" id="39947.A2ZP58"/>
<dbReference type="PaxDb" id="39947-A2ZP58"/>
<dbReference type="eggNOG" id="KOG0681">
    <property type="taxonomic scope" value="Eukaryota"/>
</dbReference>
<dbReference type="HOGENOM" id="CLU_008246_1_0_1"/>
<dbReference type="InParanoid" id="A2ZP58"/>
<dbReference type="Proteomes" id="UP000000763">
    <property type="component" value="Chromosome 1"/>
</dbReference>
<dbReference type="Proteomes" id="UP000007752">
    <property type="component" value="Chromosome 1"/>
</dbReference>
<dbReference type="Proteomes" id="UP000059680">
    <property type="component" value="Chromosome 1"/>
</dbReference>
<dbReference type="GO" id="GO:0005737">
    <property type="term" value="C:cytoplasm"/>
    <property type="evidence" value="ECO:0000318"/>
    <property type="project" value="GO_Central"/>
</dbReference>
<dbReference type="GO" id="GO:0031011">
    <property type="term" value="C:Ino80 complex"/>
    <property type="evidence" value="ECO:0000318"/>
    <property type="project" value="GO_Central"/>
</dbReference>
<dbReference type="GO" id="GO:0006355">
    <property type="term" value="P:regulation of DNA-templated transcription"/>
    <property type="evidence" value="ECO:0000318"/>
    <property type="project" value="GO_Central"/>
</dbReference>
<dbReference type="FunFam" id="3.90.640.10:FF:000034">
    <property type="entry name" value="Actin-related protein 5"/>
    <property type="match status" value="1"/>
</dbReference>
<dbReference type="FunFam" id="3.90.640.10:FF:000060">
    <property type="entry name" value="Actin-related protein 5"/>
    <property type="match status" value="1"/>
</dbReference>
<dbReference type="FunFam" id="3.30.420.40:FF:000048">
    <property type="entry name" value="ARP5 actin-related protein 5 homolog"/>
    <property type="match status" value="1"/>
</dbReference>
<dbReference type="FunFam" id="3.30.420.40:FF:000058">
    <property type="entry name" value="Putative actin-related protein 5"/>
    <property type="match status" value="1"/>
</dbReference>
<dbReference type="Gene3D" id="3.30.420.40">
    <property type="match status" value="1"/>
</dbReference>
<dbReference type="Gene3D" id="3.90.640.10">
    <property type="entry name" value="Actin, Chain A, domain 4"/>
    <property type="match status" value="1"/>
</dbReference>
<dbReference type="InterPro" id="IPR004000">
    <property type="entry name" value="Actin"/>
</dbReference>
<dbReference type="InterPro" id="IPR043129">
    <property type="entry name" value="ATPase_NBD"/>
</dbReference>
<dbReference type="PANTHER" id="PTHR11937">
    <property type="entry name" value="ACTIN"/>
    <property type="match status" value="1"/>
</dbReference>
<dbReference type="Pfam" id="PF00022">
    <property type="entry name" value="Actin"/>
    <property type="match status" value="1"/>
</dbReference>
<dbReference type="SMART" id="SM00268">
    <property type="entry name" value="ACTIN"/>
    <property type="match status" value="1"/>
</dbReference>
<dbReference type="SUPFAM" id="SSF53067">
    <property type="entry name" value="Actin-like ATPase domain"/>
    <property type="match status" value="1"/>
</dbReference>
<comment type="subcellular location">
    <subcellularLocation>
        <location evidence="1">Nucleus</location>
    </subcellularLocation>
</comment>
<comment type="similarity">
    <text evidence="4">Belongs to the actin family. ARP5 subfamily.</text>
</comment>
<comment type="sequence caution" evidence="4">
    <conflict type="erroneous gene model prediction">
        <sequence resource="EMBL-CDS" id="BAD61490"/>
    </conflict>
</comment>
<feature type="chain" id="PRO_0000320533" description="Actin-related protein 5">
    <location>
        <begin position="1"/>
        <end position="575"/>
    </location>
</feature>
<feature type="region of interest" description="Disordered" evidence="3">
    <location>
        <begin position="267"/>
        <end position="298"/>
    </location>
</feature>
<feature type="region of interest" description="Disordered" evidence="3">
    <location>
        <begin position="313"/>
        <end position="343"/>
    </location>
</feature>
<feature type="coiled-coil region" evidence="2">
    <location>
        <begin position="100"/>
        <end position="196"/>
    </location>
</feature>
<feature type="coiled-coil region" evidence="2">
    <location>
        <begin position="273"/>
        <end position="325"/>
    </location>
</feature>
<feature type="compositionally biased region" description="Basic and acidic residues" evidence="3">
    <location>
        <begin position="270"/>
        <end position="298"/>
    </location>
</feature>
<name>ARP5_ORYSJ</name>
<gene>
    <name type="primary">ARP5</name>
    <name type="ordered locus">Os01g0144340</name>
    <name type="ORF">OsJ_000330</name>
    <name type="ORF">P0024G09.33</name>
</gene>
<reference key="1">
    <citation type="journal article" date="2002" name="Nature">
        <title>The genome sequence and structure of rice chromosome 1.</title>
        <authorList>
            <person name="Sasaki T."/>
            <person name="Matsumoto T."/>
            <person name="Yamamoto K."/>
            <person name="Sakata K."/>
            <person name="Baba T."/>
            <person name="Katayose Y."/>
            <person name="Wu J."/>
            <person name="Niimura Y."/>
            <person name="Cheng Z."/>
            <person name="Nagamura Y."/>
            <person name="Antonio B.A."/>
            <person name="Kanamori H."/>
            <person name="Hosokawa S."/>
            <person name="Masukawa M."/>
            <person name="Arikawa K."/>
            <person name="Chiden Y."/>
            <person name="Hayashi M."/>
            <person name="Okamoto M."/>
            <person name="Ando T."/>
            <person name="Aoki H."/>
            <person name="Arita K."/>
            <person name="Hamada M."/>
            <person name="Harada C."/>
            <person name="Hijishita S."/>
            <person name="Honda M."/>
            <person name="Ichikawa Y."/>
            <person name="Idonuma A."/>
            <person name="Iijima M."/>
            <person name="Ikeda M."/>
            <person name="Ikeno M."/>
            <person name="Ito S."/>
            <person name="Ito T."/>
            <person name="Ito Y."/>
            <person name="Ito Y."/>
            <person name="Iwabuchi A."/>
            <person name="Kamiya K."/>
            <person name="Karasawa W."/>
            <person name="Katagiri S."/>
            <person name="Kikuta A."/>
            <person name="Kobayashi N."/>
            <person name="Kono I."/>
            <person name="Machita K."/>
            <person name="Maehara T."/>
            <person name="Mizuno H."/>
            <person name="Mizubayashi T."/>
            <person name="Mukai Y."/>
            <person name="Nagasaki H."/>
            <person name="Nakashima M."/>
            <person name="Nakama Y."/>
            <person name="Nakamichi Y."/>
            <person name="Nakamura M."/>
            <person name="Namiki N."/>
            <person name="Negishi M."/>
            <person name="Ohta I."/>
            <person name="Ono N."/>
            <person name="Saji S."/>
            <person name="Sakai K."/>
            <person name="Shibata M."/>
            <person name="Shimokawa T."/>
            <person name="Shomura A."/>
            <person name="Song J."/>
            <person name="Takazaki Y."/>
            <person name="Terasawa K."/>
            <person name="Tsuji K."/>
            <person name="Waki K."/>
            <person name="Yamagata H."/>
            <person name="Yamane H."/>
            <person name="Yoshiki S."/>
            <person name="Yoshihara R."/>
            <person name="Yukawa K."/>
            <person name="Zhong H."/>
            <person name="Iwama H."/>
            <person name="Endo T."/>
            <person name="Ito H."/>
            <person name="Hahn J.H."/>
            <person name="Kim H.-I."/>
            <person name="Eun M.-Y."/>
            <person name="Yano M."/>
            <person name="Jiang J."/>
            <person name="Gojobori T."/>
        </authorList>
    </citation>
    <scope>NUCLEOTIDE SEQUENCE [LARGE SCALE GENOMIC DNA]</scope>
    <source>
        <strain>cv. Nipponbare</strain>
    </source>
</reference>
<reference key="2">
    <citation type="journal article" date="2005" name="Nature">
        <title>The map-based sequence of the rice genome.</title>
        <authorList>
            <consortium name="International rice genome sequencing project (IRGSP)"/>
        </authorList>
    </citation>
    <scope>NUCLEOTIDE SEQUENCE [LARGE SCALE GENOMIC DNA]</scope>
    <source>
        <strain>cv. Nipponbare</strain>
    </source>
</reference>
<reference key="3">
    <citation type="journal article" date="2013" name="Rice">
        <title>Improvement of the Oryza sativa Nipponbare reference genome using next generation sequence and optical map data.</title>
        <authorList>
            <person name="Kawahara Y."/>
            <person name="de la Bastide M."/>
            <person name="Hamilton J.P."/>
            <person name="Kanamori H."/>
            <person name="McCombie W.R."/>
            <person name="Ouyang S."/>
            <person name="Schwartz D.C."/>
            <person name="Tanaka T."/>
            <person name="Wu J."/>
            <person name="Zhou S."/>
            <person name="Childs K.L."/>
            <person name="Davidson R.M."/>
            <person name="Lin H."/>
            <person name="Quesada-Ocampo L."/>
            <person name="Vaillancourt B."/>
            <person name="Sakai H."/>
            <person name="Lee S.S."/>
            <person name="Kim J."/>
            <person name="Numa H."/>
            <person name="Itoh T."/>
            <person name="Buell C.R."/>
            <person name="Matsumoto T."/>
        </authorList>
    </citation>
    <scope>GENOME REANNOTATION</scope>
    <source>
        <strain>cv. Nipponbare</strain>
    </source>
</reference>
<reference key="4">
    <citation type="journal article" date="2005" name="PLoS Biol.">
        <title>The genomes of Oryza sativa: a history of duplications.</title>
        <authorList>
            <person name="Yu J."/>
            <person name="Wang J."/>
            <person name="Lin W."/>
            <person name="Li S."/>
            <person name="Li H."/>
            <person name="Zhou J."/>
            <person name="Ni P."/>
            <person name="Dong W."/>
            <person name="Hu S."/>
            <person name="Zeng C."/>
            <person name="Zhang J."/>
            <person name="Zhang Y."/>
            <person name="Li R."/>
            <person name="Xu Z."/>
            <person name="Li S."/>
            <person name="Li X."/>
            <person name="Zheng H."/>
            <person name="Cong L."/>
            <person name="Lin L."/>
            <person name="Yin J."/>
            <person name="Geng J."/>
            <person name="Li G."/>
            <person name="Shi J."/>
            <person name="Liu J."/>
            <person name="Lv H."/>
            <person name="Li J."/>
            <person name="Wang J."/>
            <person name="Deng Y."/>
            <person name="Ran L."/>
            <person name="Shi X."/>
            <person name="Wang X."/>
            <person name="Wu Q."/>
            <person name="Li C."/>
            <person name="Ren X."/>
            <person name="Wang J."/>
            <person name="Wang X."/>
            <person name="Li D."/>
            <person name="Liu D."/>
            <person name="Zhang X."/>
            <person name="Ji Z."/>
            <person name="Zhao W."/>
            <person name="Sun Y."/>
            <person name="Zhang Z."/>
            <person name="Bao J."/>
            <person name="Han Y."/>
            <person name="Dong L."/>
            <person name="Ji J."/>
            <person name="Chen P."/>
            <person name="Wu S."/>
            <person name="Liu J."/>
            <person name="Xiao Y."/>
            <person name="Bu D."/>
            <person name="Tan J."/>
            <person name="Yang L."/>
            <person name="Ye C."/>
            <person name="Zhang J."/>
            <person name="Xu J."/>
            <person name="Zhou Y."/>
            <person name="Yu Y."/>
            <person name="Zhang B."/>
            <person name="Zhuang S."/>
            <person name="Wei H."/>
            <person name="Liu B."/>
            <person name="Lei M."/>
            <person name="Yu H."/>
            <person name="Li Y."/>
            <person name="Xu H."/>
            <person name="Wei S."/>
            <person name="He X."/>
            <person name="Fang L."/>
            <person name="Zhang Z."/>
            <person name="Zhang Y."/>
            <person name="Huang X."/>
            <person name="Su Z."/>
            <person name="Tong W."/>
            <person name="Li J."/>
            <person name="Tong Z."/>
            <person name="Li S."/>
            <person name="Ye J."/>
            <person name="Wang L."/>
            <person name="Fang L."/>
            <person name="Lei T."/>
            <person name="Chen C.-S."/>
            <person name="Chen H.-C."/>
            <person name="Xu Z."/>
            <person name="Li H."/>
            <person name="Huang H."/>
            <person name="Zhang F."/>
            <person name="Xu H."/>
            <person name="Li N."/>
            <person name="Zhao C."/>
            <person name="Li S."/>
            <person name="Dong L."/>
            <person name="Huang Y."/>
            <person name="Li L."/>
            <person name="Xi Y."/>
            <person name="Qi Q."/>
            <person name="Li W."/>
            <person name="Zhang B."/>
            <person name="Hu W."/>
            <person name="Zhang Y."/>
            <person name="Tian X."/>
            <person name="Jiao Y."/>
            <person name="Liang X."/>
            <person name="Jin J."/>
            <person name="Gao L."/>
            <person name="Zheng W."/>
            <person name="Hao B."/>
            <person name="Liu S.-M."/>
            <person name="Wang W."/>
            <person name="Yuan L."/>
            <person name="Cao M."/>
            <person name="McDermott J."/>
            <person name="Samudrala R."/>
            <person name="Wang J."/>
            <person name="Wong G.K.-S."/>
            <person name="Yang H."/>
        </authorList>
    </citation>
    <scope>NUCLEOTIDE SEQUENCE [LARGE SCALE GENOMIC DNA]</scope>
    <source>
        <strain>cv. Nipponbare</strain>
    </source>
</reference>
<reference key="5">
    <citation type="journal article" date="2004" name="Trends Plant Sci.">
        <title>Plant actin-related proteins.</title>
        <authorList>
            <person name="Kandasamy M.K."/>
            <person name="Deal R.B."/>
            <person name="McKinney E.C."/>
            <person name="Meagher R.B."/>
        </authorList>
    </citation>
    <scope>REVIEW</scope>
    <scope>GENE FAMILY</scope>
    <scope>NOMENCLATURE</scope>
</reference>
<evidence type="ECO:0000250" key="1">
    <source>
        <dbReference type="UniProtKB" id="Q940Z2"/>
    </source>
</evidence>
<evidence type="ECO:0000255" key="2"/>
<evidence type="ECO:0000256" key="3">
    <source>
        <dbReference type="SAM" id="MobiDB-lite"/>
    </source>
</evidence>
<evidence type="ECO:0000305" key="4"/>